<sequence>MGRKRFITDSYPVVKKREGPPGHSKGELAPELGEDTQSLSQEETELELLRQFDLAWQYGPCTGITRLQRWSRAEQMGLKPPLEVYQVLKAHPEDPHFQCSLWHLYPL</sequence>
<dbReference type="EMBL" id="AK010477">
    <property type="protein sequence ID" value="BAB26970.1"/>
    <property type="molecule type" value="mRNA"/>
</dbReference>
<dbReference type="EMBL" id="BC028520">
    <property type="protein sequence ID" value="AAH28520.1"/>
    <property type="molecule type" value="mRNA"/>
</dbReference>
<dbReference type="CCDS" id="CCDS29424.1"/>
<dbReference type="RefSeq" id="NP_081472.1">
    <property type="nucleotide sequence ID" value="NM_027196.4"/>
</dbReference>
<dbReference type="SMR" id="Q9CWP8"/>
<dbReference type="ComplexPortal" id="CPX-2098">
    <property type="entry name" value="DNA polymerase delta complex"/>
</dbReference>
<dbReference type="CORUM" id="Q9CWP8"/>
<dbReference type="FunCoup" id="Q9CWP8">
    <property type="interactions" value="289"/>
</dbReference>
<dbReference type="STRING" id="10090.ENSMUSP00000025773"/>
<dbReference type="PhosphoSitePlus" id="Q9CWP8"/>
<dbReference type="PaxDb" id="10090-ENSMUSP00000025773"/>
<dbReference type="ProteomicsDB" id="277388"/>
<dbReference type="DNASU" id="69745"/>
<dbReference type="Ensembl" id="ENSMUST00000025773.5">
    <property type="protein sequence ID" value="ENSMUSP00000025773.4"/>
    <property type="gene ID" value="ENSMUSG00000024854.5"/>
</dbReference>
<dbReference type="GeneID" id="69745"/>
<dbReference type="KEGG" id="mmu:69745"/>
<dbReference type="UCSC" id="uc008fzm.2">
    <property type="organism name" value="mouse"/>
</dbReference>
<dbReference type="AGR" id="MGI:1916995"/>
<dbReference type="CTD" id="57804"/>
<dbReference type="MGI" id="MGI:1916995">
    <property type="gene designation" value="Pold4"/>
</dbReference>
<dbReference type="VEuPathDB" id="HostDB:ENSMUSG00000024854"/>
<dbReference type="eggNOG" id="ENOG502SC9I">
    <property type="taxonomic scope" value="Eukaryota"/>
</dbReference>
<dbReference type="GeneTree" id="ENSGT00390000005096"/>
<dbReference type="HOGENOM" id="CLU_132157_0_0_1"/>
<dbReference type="InParanoid" id="Q9CWP8"/>
<dbReference type="OMA" id="CTGISRM"/>
<dbReference type="OrthoDB" id="337486at2759"/>
<dbReference type="PhylomeDB" id="Q9CWP8"/>
<dbReference type="TreeFam" id="TF103004"/>
<dbReference type="Reactome" id="R-MMU-110314">
    <property type="pathway name" value="Recognition of DNA damage by PCNA-containing replication complex"/>
</dbReference>
<dbReference type="Reactome" id="R-MMU-174411">
    <property type="pathway name" value="Polymerase switching on the C-strand of the telomere"/>
</dbReference>
<dbReference type="Reactome" id="R-MMU-174414">
    <property type="pathway name" value="Processive synthesis on the C-strand of the telomere"/>
</dbReference>
<dbReference type="Reactome" id="R-MMU-174417">
    <property type="pathway name" value="Telomere C-strand (Lagging Strand) Synthesis"/>
</dbReference>
<dbReference type="Reactome" id="R-MMU-174437">
    <property type="pathway name" value="Removal of the Flap Intermediate from the C-strand"/>
</dbReference>
<dbReference type="Reactome" id="R-MMU-5358565">
    <property type="pathway name" value="Mismatch repair (MMR) directed by MSH2:MSH6 (MutSalpha)"/>
</dbReference>
<dbReference type="Reactome" id="R-MMU-5358606">
    <property type="pathway name" value="Mismatch repair (MMR) directed by MSH2:MSH3 (MutSbeta)"/>
</dbReference>
<dbReference type="Reactome" id="R-MMU-5651801">
    <property type="pathway name" value="PCNA-Dependent Long Patch Base Excision Repair"/>
</dbReference>
<dbReference type="Reactome" id="R-MMU-5656169">
    <property type="pathway name" value="Termination of translesion DNA synthesis"/>
</dbReference>
<dbReference type="Reactome" id="R-MMU-5685942">
    <property type="pathway name" value="HDR through Homologous Recombination (HRR)"/>
</dbReference>
<dbReference type="Reactome" id="R-MMU-5696397">
    <property type="pathway name" value="Gap-filling DNA repair synthesis and ligation in GG-NER"/>
</dbReference>
<dbReference type="Reactome" id="R-MMU-5696400">
    <property type="pathway name" value="Dual Incision in GG-NER"/>
</dbReference>
<dbReference type="Reactome" id="R-MMU-6782135">
    <property type="pathway name" value="Dual incision in TC-NER"/>
</dbReference>
<dbReference type="Reactome" id="R-MMU-6782210">
    <property type="pathway name" value="Gap-filling DNA repair synthesis and ligation in TC-NER"/>
</dbReference>
<dbReference type="Reactome" id="R-MMU-69091">
    <property type="pathway name" value="Polymerase switching"/>
</dbReference>
<dbReference type="Reactome" id="R-MMU-69166">
    <property type="pathway name" value="Removal of the Flap Intermediate"/>
</dbReference>
<dbReference type="Reactome" id="R-MMU-69183">
    <property type="pathway name" value="Processive synthesis on the lagging strand"/>
</dbReference>
<dbReference type="BioGRID-ORCS" id="69745">
    <property type="hits" value="0 hits in 114 CRISPR screens"/>
</dbReference>
<dbReference type="PRO" id="PR:Q9CWP8"/>
<dbReference type="Proteomes" id="UP000000589">
    <property type="component" value="Chromosome 19"/>
</dbReference>
<dbReference type="RNAct" id="Q9CWP8">
    <property type="molecule type" value="protein"/>
</dbReference>
<dbReference type="Bgee" id="ENSMUSG00000024854">
    <property type="expression patterns" value="Expressed in spleen and 70 other cell types or tissues"/>
</dbReference>
<dbReference type="ExpressionAtlas" id="Q9CWP8">
    <property type="expression patterns" value="baseline and differential"/>
</dbReference>
<dbReference type="GO" id="GO:0043625">
    <property type="term" value="C:delta DNA polymerase complex"/>
    <property type="evidence" value="ECO:0000266"/>
    <property type="project" value="ComplexPortal"/>
</dbReference>
<dbReference type="GO" id="GO:0005634">
    <property type="term" value="C:nucleus"/>
    <property type="evidence" value="ECO:0000314"/>
    <property type="project" value="MGI"/>
</dbReference>
<dbReference type="GO" id="GO:0000731">
    <property type="term" value="P:DNA synthesis involved in DNA repair"/>
    <property type="evidence" value="ECO:0007669"/>
    <property type="project" value="InterPro"/>
</dbReference>
<dbReference type="GO" id="GO:0006261">
    <property type="term" value="P:DNA-templated DNA replication"/>
    <property type="evidence" value="ECO:0000266"/>
    <property type="project" value="ComplexPortal"/>
</dbReference>
<dbReference type="GO" id="GO:0001938">
    <property type="term" value="P:positive regulation of endothelial cell proliferation"/>
    <property type="evidence" value="ECO:0000315"/>
    <property type="project" value="MGI"/>
</dbReference>
<dbReference type="InterPro" id="IPR007218">
    <property type="entry name" value="DNA_pol_delta_4"/>
</dbReference>
<dbReference type="PANTHER" id="PTHR14303">
    <property type="entry name" value="DNA POLYMERASE DELTA SUBUNIT 4"/>
    <property type="match status" value="1"/>
</dbReference>
<dbReference type="PANTHER" id="PTHR14303:SF0">
    <property type="entry name" value="DNA POLYMERASE DELTA SUBUNIT 4"/>
    <property type="match status" value="1"/>
</dbReference>
<dbReference type="Pfam" id="PF04081">
    <property type="entry name" value="DNA_pol_delta_4"/>
    <property type="match status" value="1"/>
</dbReference>
<feature type="chain" id="PRO_0000186052" description="DNA polymerase delta subunit 4">
    <location>
        <begin position="1"/>
        <end position="107"/>
    </location>
</feature>
<feature type="region of interest" description="Disordered" evidence="2">
    <location>
        <begin position="1"/>
        <end position="40"/>
    </location>
</feature>
<feature type="short sequence motif" description="PCNA-interaction protein motif (PIP box)" evidence="1">
    <location>
        <begin position="1"/>
        <end position="16"/>
    </location>
</feature>
<feature type="compositionally biased region" description="Basic and acidic residues" evidence="2">
    <location>
        <begin position="15"/>
        <end position="28"/>
    </location>
</feature>
<organism>
    <name type="scientific">Mus musculus</name>
    <name type="common">Mouse</name>
    <dbReference type="NCBI Taxonomy" id="10090"/>
    <lineage>
        <taxon>Eukaryota</taxon>
        <taxon>Metazoa</taxon>
        <taxon>Chordata</taxon>
        <taxon>Craniata</taxon>
        <taxon>Vertebrata</taxon>
        <taxon>Euteleostomi</taxon>
        <taxon>Mammalia</taxon>
        <taxon>Eutheria</taxon>
        <taxon>Euarchontoglires</taxon>
        <taxon>Glires</taxon>
        <taxon>Rodentia</taxon>
        <taxon>Myomorpha</taxon>
        <taxon>Muroidea</taxon>
        <taxon>Muridae</taxon>
        <taxon>Murinae</taxon>
        <taxon>Mus</taxon>
        <taxon>Mus</taxon>
    </lineage>
</organism>
<accession>Q9CWP8</accession>
<gene>
    <name type="primary">Pold4</name>
</gene>
<name>DPOD4_MOUSE</name>
<comment type="function">
    <text evidence="1">As a component of the tetrameric DNA polymerase delta complex (Pol-delta4), plays a role in high fidelity genome replication and repair. Within this complex, increases the rate of DNA synthesis and decreases fidelity by regulating POLD1 polymerase and proofreading 3' to 5' exonuclease activity. Pol-delta4 participates in Okazaki fragment processing, through both the short flap pathway, as well as a nick translation system. Under conditions of DNA replication stress, required for the repair of broken replication forks through break-induced replication (BIR), a mechanism that may induce segmental genomic duplications of up to 200 kb. Involved in Pol-delta4 translesion synthesis (TLS) of templates carrying O6-methylguanine or abasic sites. Its degradation in response to DNA damage is required for the inhibition of fork progression and cell survival.</text>
</comment>
<comment type="subunit">
    <text evidence="1">Component of the tetrameric DNA polymerase delta complex (Pol-delta4), which consists of POLD1/p125, POLD2/p50, POLD3/p66/p68 and POLD4/p12, with POLD1 bearing DNA polymerase and 3' to 5' proofreading exonuclease activities. Within this complex, directly interacts with POLD1 and POLD2. Directly interacts with PCNA, as do POLD1 and POLD3; this interaction stimulates Pol-delta4 polymerase activity. As POLD1 and POLD2, directly interacts with WRNIP1; this interaction stimulates DNA polymerase delta-mediated DNA synthesis, independently of the presence of PCNA, possibly by increasing initiation frequency. Upon genotoxic stress induced by DNA damaging agents or by replication stress, POLD4 is proteolytically degraded and Pol-delta4 is converted into a trimeric form of the complex (Pol-delta3) that has an increased proofreading activity. The DNA polymerase delta complex interacts with POLDIP2; this interaction is probably mediated through direct binding to POLD2.</text>
</comment>
<comment type="subcellular location">
    <subcellularLocation>
        <location evidence="1">Nucleus</location>
    </subcellularLocation>
    <text evidence="1">Partially recruited to DNA damage sites within 2 hours following UV irradiation, before degradation.</text>
</comment>
<comment type="induction">
    <text evidence="3">In response to DNA damage or genotoxic stress, such as UV irradiation or treatment with an alkylating agent, protein expression drastically drops.</text>
</comment>
<comment type="PTM">
    <text evidence="3">Ubiquitinated; undergoes 'Lys-48'-linked polyubiquitination in response to UV irradiation or treatment with an alkylating agent, leading to proteasomal degradation. This modification is mediated, at least in part, by RNF8.</text>
</comment>
<comment type="PTM">
    <text evidence="1">Ubiquitinated; undergoes 'Lys-48'-linked ubiquitination in response to UV irradiation, leading to proteasomal degradation. This modification is partly mediated by RNF8 and by the DCX(DTL) E3 ubiquitin ligase complex (also called CRL4(CDT2)). Efficient degradation requires the presence of PCNA and is required for the inhibition of fork progression after DNA damage.</text>
</comment>
<comment type="similarity">
    <text evidence="4">Belongs to the DNA polymerase delta subunit 4 family.</text>
</comment>
<proteinExistence type="evidence at protein level"/>
<reference key="1">
    <citation type="journal article" date="2005" name="Science">
        <title>The transcriptional landscape of the mammalian genome.</title>
        <authorList>
            <person name="Carninci P."/>
            <person name="Kasukawa T."/>
            <person name="Katayama S."/>
            <person name="Gough J."/>
            <person name="Frith M.C."/>
            <person name="Maeda N."/>
            <person name="Oyama R."/>
            <person name="Ravasi T."/>
            <person name="Lenhard B."/>
            <person name="Wells C."/>
            <person name="Kodzius R."/>
            <person name="Shimokawa K."/>
            <person name="Bajic V.B."/>
            <person name="Brenner S.E."/>
            <person name="Batalov S."/>
            <person name="Forrest A.R."/>
            <person name="Zavolan M."/>
            <person name="Davis M.J."/>
            <person name="Wilming L.G."/>
            <person name="Aidinis V."/>
            <person name="Allen J.E."/>
            <person name="Ambesi-Impiombato A."/>
            <person name="Apweiler R."/>
            <person name="Aturaliya R.N."/>
            <person name="Bailey T.L."/>
            <person name="Bansal M."/>
            <person name="Baxter L."/>
            <person name="Beisel K.W."/>
            <person name="Bersano T."/>
            <person name="Bono H."/>
            <person name="Chalk A.M."/>
            <person name="Chiu K.P."/>
            <person name="Choudhary V."/>
            <person name="Christoffels A."/>
            <person name="Clutterbuck D.R."/>
            <person name="Crowe M.L."/>
            <person name="Dalla E."/>
            <person name="Dalrymple B.P."/>
            <person name="de Bono B."/>
            <person name="Della Gatta G."/>
            <person name="di Bernardo D."/>
            <person name="Down T."/>
            <person name="Engstrom P."/>
            <person name="Fagiolini M."/>
            <person name="Faulkner G."/>
            <person name="Fletcher C.F."/>
            <person name="Fukushima T."/>
            <person name="Furuno M."/>
            <person name="Futaki S."/>
            <person name="Gariboldi M."/>
            <person name="Georgii-Hemming P."/>
            <person name="Gingeras T.R."/>
            <person name="Gojobori T."/>
            <person name="Green R.E."/>
            <person name="Gustincich S."/>
            <person name="Harbers M."/>
            <person name="Hayashi Y."/>
            <person name="Hensch T.K."/>
            <person name="Hirokawa N."/>
            <person name="Hill D."/>
            <person name="Huminiecki L."/>
            <person name="Iacono M."/>
            <person name="Ikeo K."/>
            <person name="Iwama A."/>
            <person name="Ishikawa T."/>
            <person name="Jakt M."/>
            <person name="Kanapin A."/>
            <person name="Katoh M."/>
            <person name="Kawasawa Y."/>
            <person name="Kelso J."/>
            <person name="Kitamura H."/>
            <person name="Kitano H."/>
            <person name="Kollias G."/>
            <person name="Krishnan S.P."/>
            <person name="Kruger A."/>
            <person name="Kummerfeld S.K."/>
            <person name="Kurochkin I.V."/>
            <person name="Lareau L.F."/>
            <person name="Lazarevic D."/>
            <person name="Lipovich L."/>
            <person name="Liu J."/>
            <person name="Liuni S."/>
            <person name="McWilliam S."/>
            <person name="Madan Babu M."/>
            <person name="Madera M."/>
            <person name="Marchionni L."/>
            <person name="Matsuda H."/>
            <person name="Matsuzawa S."/>
            <person name="Miki H."/>
            <person name="Mignone F."/>
            <person name="Miyake S."/>
            <person name="Morris K."/>
            <person name="Mottagui-Tabar S."/>
            <person name="Mulder N."/>
            <person name="Nakano N."/>
            <person name="Nakauchi H."/>
            <person name="Ng P."/>
            <person name="Nilsson R."/>
            <person name="Nishiguchi S."/>
            <person name="Nishikawa S."/>
            <person name="Nori F."/>
            <person name="Ohara O."/>
            <person name="Okazaki Y."/>
            <person name="Orlando V."/>
            <person name="Pang K.C."/>
            <person name="Pavan W.J."/>
            <person name="Pavesi G."/>
            <person name="Pesole G."/>
            <person name="Petrovsky N."/>
            <person name="Piazza S."/>
            <person name="Reed J."/>
            <person name="Reid J.F."/>
            <person name="Ring B.Z."/>
            <person name="Ringwald M."/>
            <person name="Rost B."/>
            <person name="Ruan Y."/>
            <person name="Salzberg S.L."/>
            <person name="Sandelin A."/>
            <person name="Schneider C."/>
            <person name="Schoenbach C."/>
            <person name="Sekiguchi K."/>
            <person name="Semple C.A."/>
            <person name="Seno S."/>
            <person name="Sessa L."/>
            <person name="Sheng Y."/>
            <person name="Shibata Y."/>
            <person name="Shimada H."/>
            <person name="Shimada K."/>
            <person name="Silva D."/>
            <person name="Sinclair B."/>
            <person name="Sperling S."/>
            <person name="Stupka E."/>
            <person name="Sugiura K."/>
            <person name="Sultana R."/>
            <person name="Takenaka Y."/>
            <person name="Taki K."/>
            <person name="Tammoja K."/>
            <person name="Tan S.L."/>
            <person name="Tang S."/>
            <person name="Taylor M.S."/>
            <person name="Tegner J."/>
            <person name="Teichmann S.A."/>
            <person name="Ueda H.R."/>
            <person name="van Nimwegen E."/>
            <person name="Verardo R."/>
            <person name="Wei C.L."/>
            <person name="Yagi K."/>
            <person name="Yamanishi H."/>
            <person name="Zabarovsky E."/>
            <person name="Zhu S."/>
            <person name="Zimmer A."/>
            <person name="Hide W."/>
            <person name="Bult C."/>
            <person name="Grimmond S.M."/>
            <person name="Teasdale R.D."/>
            <person name="Liu E.T."/>
            <person name="Brusic V."/>
            <person name="Quackenbush J."/>
            <person name="Wahlestedt C."/>
            <person name="Mattick J.S."/>
            <person name="Hume D.A."/>
            <person name="Kai C."/>
            <person name="Sasaki D."/>
            <person name="Tomaru Y."/>
            <person name="Fukuda S."/>
            <person name="Kanamori-Katayama M."/>
            <person name="Suzuki M."/>
            <person name="Aoki J."/>
            <person name="Arakawa T."/>
            <person name="Iida J."/>
            <person name="Imamura K."/>
            <person name="Itoh M."/>
            <person name="Kato T."/>
            <person name="Kawaji H."/>
            <person name="Kawagashira N."/>
            <person name="Kawashima T."/>
            <person name="Kojima M."/>
            <person name="Kondo S."/>
            <person name="Konno H."/>
            <person name="Nakano K."/>
            <person name="Ninomiya N."/>
            <person name="Nishio T."/>
            <person name="Okada M."/>
            <person name="Plessy C."/>
            <person name="Shibata K."/>
            <person name="Shiraki T."/>
            <person name="Suzuki S."/>
            <person name="Tagami M."/>
            <person name="Waki K."/>
            <person name="Watahiki A."/>
            <person name="Okamura-Oho Y."/>
            <person name="Suzuki H."/>
            <person name="Kawai J."/>
            <person name="Hayashizaki Y."/>
        </authorList>
    </citation>
    <scope>NUCLEOTIDE SEQUENCE [LARGE SCALE MRNA]</scope>
    <source>
        <strain>C57BL/6J</strain>
        <tissue>Embryonic stem cell</tissue>
    </source>
</reference>
<reference key="2">
    <citation type="journal article" date="2004" name="Genome Res.">
        <title>The status, quality, and expansion of the NIH full-length cDNA project: the Mammalian Gene Collection (MGC).</title>
        <authorList>
            <consortium name="The MGC Project Team"/>
        </authorList>
    </citation>
    <scope>NUCLEOTIDE SEQUENCE [LARGE SCALE MRNA]</scope>
    <source>
        <tissue>Mammary gland</tissue>
    </source>
</reference>
<reference key="3">
    <citation type="journal article" date="2013" name="J. Biol. Chem.">
        <title>Identification of RNF8 as a ubiquitin ligase involved in targeting the p12 subunit of DNA polymerase delta for degradation in response to DNA damage.</title>
        <authorList>
            <person name="Zhang S."/>
            <person name="Zhou Y."/>
            <person name="Sarkeshik A."/>
            <person name="Yates J.R. III"/>
            <person name="Thomson T.M."/>
            <person name="Zhang Z."/>
            <person name="Lee E.Y."/>
            <person name="Lee M.Y."/>
        </authorList>
    </citation>
    <scope>UBIQUITINATION BY RNF8</scope>
    <scope>INDUCTION BY UV AND ALKYLATING AGENT</scope>
</reference>
<keyword id="KW-0227">DNA damage</keyword>
<keyword id="KW-0228">DNA excision</keyword>
<keyword id="KW-0234">DNA repair</keyword>
<keyword id="KW-0235">DNA replication</keyword>
<keyword id="KW-0539">Nucleus</keyword>
<keyword id="KW-1185">Reference proteome</keyword>
<keyword id="KW-0832">Ubl conjugation</keyword>
<protein>
    <recommendedName>
        <fullName>DNA polymerase delta subunit 4</fullName>
    </recommendedName>
    <alternativeName>
        <fullName>DNA polymerase delta subunit p12</fullName>
    </alternativeName>
</protein>
<evidence type="ECO:0000250" key="1">
    <source>
        <dbReference type="UniProtKB" id="Q9HCU8"/>
    </source>
</evidence>
<evidence type="ECO:0000256" key="2">
    <source>
        <dbReference type="SAM" id="MobiDB-lite"/>
    </source>
</evidence>
<evidence type="ECO:0000269" key="3">
    <source>
    </source>
</evidence>
<evidence type="ECO:0000305" key="4"/>